<dbReference type="EC" id="7.1.1.2" evidence="1"/>
<dbReference type="EMBL" id="U83825">
    <property type="protein sequence ID" value="AAB87199.1"/>
    <property type="molecule type" value="Genomic_DNA"/>
</dbReference>
<dbReference type="SMR" id="O21572"/>
<dbReference type="GO" id="GO:0005743">
    <property type="term" value="C:mitochondrial inner membrane"/>
    <property type="evidence" value="ECO:0000250"/>
    <property type="project" value="UniProtKB"/>
</dbReference>
<dbReference type="GO" id="GO:0030964">
    <property type="term" value="C:NADH dehydrogenase complex"/>
    <property type="evidence" value="ECO:0007669"/>
    <property type="project" value="TreeGrafter"/>
</dbReference>
<dbReference type="GO" id="GO:0008137">
    <property type="term" value="F:NADH dehydrogenase (ubiquinone) activity"/>
    <property type="evidence" value="ECO:0000250"/>
    <property type="project" value="UniProtKB"/>
</dbReference>
<dbReference type="GO" id="GO:0006120">
    <property type="term" value="P:mitochondrial electron transport, NADH to ubiquinone"/>
    <property type="evidence" value="ECO:0000250"/>
    <property type="project" value="UniProtKB"/>
</dbReference>
<dbReference type="FunFam" id="1.20.58.1610:FF:000004">
    <property type="entry name" value="NADH-quinone oxidoreductase subunit A"/>
    <property type="match status" value="1"/>
</dbReference>
<dbReference type="Gene3D" id="1.20.58.1610">
    <property type="entry name" value="NADH:ubiquinone/plastoquinone oxidoreductase, chain 3"/>
    <property type="match status" value="1"/>
</dbReference>
<dbReference type="InterPro" id="IPR000440">
    <property type="entry name" value="NADH_UbQ/plastoQ_OxRdtase_su3"/>
</dbReference>
<dbReference type="InterPro" id="IPR038430">
    <property type="entry name" value="NDAH_ubi_oxred_su3_sf"/>
</dbReference>
<dbReference type="PANTHER" id="PTHR11058">
    <property type="entry name" value="NADH-UBIQUINONE OXIDOREDUCTASE CHAIN 3"/>
    <property type="match status" value="1"/>
</dbReference>
<dbReference type="PANTHER" id="PTHR11058:SF9">
    <property type="entry name" value="NADH-UBIQUINONE OXIDOREDUCTASE CHAIN 3"/>
    <property type="match status" value="1"/>
</dbReference>
<dbReference type="Pfam" id="PF00507">
    <property type="entry name" value="Oxidored_q4"/>
    <property type="match status" value="1"/>
</dbReference>
<reference key="1">
    <citation type="journal article" date="1998" name="Mol. Biol. Evol.">
        <title>Molecular systematics and paleobiogeography of the South American sigmodontine rodents.</title>
        <authorList>
            <person name="Engel S.R."/>
            <person name="Hogan K.M."/>
            <person name="Taylor J.F."/>
            <person name="Davis S.K."/>
        </authorList>
    </citation>
    <scope>NUCLEOTIDE SEQUENCE [GENOMIC DNA]</scope>
</reference>
<evidence type="ECO:0000250" key="1">
    <source>
        <dbReference type="UniProtKB" id="P03897"/>
    </source>
</evidence>
<evidence type="ECO:0000250" key="2">
    <source>
        <dbReference type="UniProtKB" id="P03898"/>
    </source>
</evidence>
<evidence type="ECO:0000255" key="3"/>
<evidence type="ECO:0000305" key="4"/>
<organism>
    <name type="scientific">Nelsonia neotomodon</name>
    <name type="common">Diminutive woodrat</name>
    <dbReference type="NCBI Taxonomy" id="56225"/>
    <lineage>
        <taxon>Eukaryota</taxon>
        <taxon>Metazoa</taxon>
        <taxon>Chordata</taxon>
        <taxon>Craniata</taxon>
        <taxon>Vertebrata</taxon>
        <taxon>Euteleostomi</taxon>
        <taxon>Mammalia</taxon>
        <taxon>Eutheria</taxon>
        <taxon>Euarchontoglires</taxon>
        <taxon>Glires</taxon>
        <taxon>Rodentia</taxon>
        <taxon>Myomorpha</taxon>
        <taxon>Muroidea</taxon>
        <taxon>Cricetidae</taxon>
        <taxon>Neotominae</taxon>
        <taxon>Nelsonia</taxon>
    </lineage>
</organism>
<geneLocation type="mitochondrion"/>
<gene>
    <name evidence="1" type="primary">MT-ND3</name>
    <name type="synonym">MTND3</name>
    <name type="synonym">NADH3</name>
    <name type="synonym">ND3</name>
</gene>
<sequence length="115" mass="13220">MNMLVTMLINTTLSFVLILIAFWLPQLNIYTEKANPYECGFDPMSSARLPFSMKFFLVAITFLLFDLEIALLLPMPWAMQTQDIKTMTLTAFILLSVLALGLAYEWTQKGLEWTE</sequence>
<accession>O21572</accession>
<name>NU3M_NELNE</name>
<comment type="function">
    <text evidence="1">Core subunit of the mitochondrial membrane respiratory chain NADH dehydrogenase (Complex I) which catalyzes electron transfer from NADH through the respiratory chain, using ubiquinone as an electron acceptor. Essential for the catalytic activity of complex I.</text>
</comment>
<comment type="catalytic activity">
    <reaction evidence="1">
        <text>a ubiquinone + NADH + 5 H(+)(in) = a ubiquinol + NAD(+) + 4 H(+)(out)</text>
        <dbReference type="Rhea" id="RHEA:29091"/>
        <dbReference type="Rhea" id="RHEA-COMP:9565"/>
        <dbReference type="Rhea" id="RHEA-COMP:9566"/>
        <dbReference type="ChEBI" id="CHEBI:15378"/>
        <dbReference type="ChEBI" id="CHEBI:16389"/>
        <dbReference type="ChEBI" id="CHEBI:17976"/>
        <dbReference type="ChEBI" id="CHEBI:57540"/>
        <dbReference type="ChEBI" id="CHEBI:57945"/>
        <dbReference type="EC" id="7.1.1.2"/>
    </reaction>
</comment>
<comment type="subunit">
    <text evidence="1">Core subunit of respiratory chain NADH dehydrogenase (Complex I) which is composed of 45 different subunits. Interacts with TMEM186. Interacts with TMEM242 (By similarity).</text>
</comment>
<comment type="subcellular location">
    <subcellularLocation>
        <location evidence="2">Mitochondrion inner membrane</location>
        <topology evidence="3">Multi-pass membrane protein</topology>
    </subcellularLocation>
</comment>
<comment type="similarity">
    <text evidence="4">Belongs to the complex I subunit 3 family.</text>
</comment>
<proteinExistence type="inferred from homology"/>
<keyword id="KW-0249">Electron transport</keyword>
<keyword id="KW-0472">Membrane</keyword>
<keyword id="KW-0496">Mitochondrion</keyword>
<keyword id="KW-0999">Mitochondrion inner membrane</keyword>
<keyword id="KW-0520">NAD</keyword>
<keyword id="KW-0679">Respiratory chain</keyword>
<keyword id="KW-1278">Translocase</keyword>
<keyword id="KW-0812">Transmembrane</keyword>
<keyword id="KW-1133">Transmembrane helix</keyword>
<keyword id="KW-0813">Transport</keyword>
<keyword id="KW-0830">Ubiquinone</keyword>
<feature type="chain" id="PRO_0000117768" description="NADH-ubiquinone oxidoreductase chain 3">
    <location>
        <begin position="1"/>
        <end position="115"/>
    </location>
</feature>
<feature type="transmembrane region" description="Helical" evidence="3">
    <location>
        <begin position="4"/>
        <end position="24"/>
    </location>
</feature>
<feature type="transmembrane region" description="Helical" evidence="3">
    <location>
        <begin position="55"/>
        <end position="75"/>
    </location>
</feature>
<feature type="transmembrane region" description="Helical" evidence="3">
    <location>
        <begin position="86"/>
        <end position="106"/>
    </location>
</feature>
<protein>
    <recommendedName>
        <fullName evidence="1">NADH-ubiquinone oxidoreductase chain 3</fullName>
        <ecNumber evidence="1">7.1.1.2</ecNumber>
    </recommendedName>
    <alternativeName>
        <fullName>NADH dehydrogenase subunit 3</fullName>
    </alternativeName>
</protein>